<dbReference type="EC" id="6.3.3.1" evidence="1"/>
<dbReference type="EMBL" id="CU928160">
    <property type="protein sequence ID" value="CAQ99391.1"/>
    <property type="molecule type" value="Genomic_DNA"/>
</dbReference>
<dbReference type="RefSeq" id="WP_001295474.1">
    <property type="nucleotide sequence ID" value="NC_011741.1"/>
</dbReference>
<dbReference type="SMR" id="B7M7K3"/>
<dbReference type="GeneID" id="93774637"/>
<dbReference type="KEGG" id="ecr:ECIAI1_2551"/>
<dbReference type="HOGENOM" id="CLU_047116_0_0_6"/>
<dbReference type="UniPathway" id="UPA00074">
    <property type="reaction ID" value="UER00129"/>
</dbReference>
<dbReference type="GO" id="GO:0005829">
    <property type="term" value="C:cytosol"/>
    <property type="evidence" value="ECO:0007669"/>
    <property type="project" value="TreeGrafter"/>
</dbReference>
<dbReference type="GO" id="GO:0005524">
    <property type="term" value="F:ATP binding"/>
    <property type="evidence" value="ECO:0007669"/>
    <property type="project" value="UniProtKB-KW"/>
</dbReference>
<dbReference type="GO" id="GO:0004637">
    <property type="term" value="F:phosphoribosylamine-glycine ligase activity"/>
    <property type="evidence" value="ECO:0007669"/>
    <property type="project" value="TreeGrafter"/>
</dbReference>
<dbReference type="GO" id="GO:0004641">
    <property type="term" value="F:phosphoribosylformylglycinamidine cyclo-ligase activity"/>
    <property type="evidence" value="ECO:0007669"/>
    <property type="project" value="UniProtKB-UniRule"/>
</dbReference>
<dbReference type="GO" id="GO:0006189">
    <property type="term" value="P:'de novo' IMP biosynthetic process"/>
    <property type="evidence" value="ECO:0007669"/>
    <property type="project" value="UniProtKB-UniRule"/>
</dbReference>
<dbReference type="GO" id="GO:0046084">
    <property type="term" value="P:adenine biosynthetic process"/>
    <property type="evidence" value="ECO:0007669"/>
    <property type="project" value="TreeGrafter"/>
</dbReference>
<dbReference type="CDD" id="cd02196">
    <property type="entry name" value="PurM"/>
    <property type="match status" value="1"/>
</dbReference>
<dbReference type="FunFam" id="3.30.1330.10:FF:000001">
    <property type="entry name" value="Phosphoribosylformylglycinamidine cyclo-ligase"/>
    <property type="match status" value="1"/>
</dbReference>
<dbReference type="FunFam" id="3.90.650.10:FF:000001">
    <property type="entry name" value="Phosphoribosylformylglycinamidine cyclo-ligase"/>
    <property type="match status" value="1"/>
</dbReference>
<dbReference type="Gene3D" id="3.90.650.10">
    <property type="entry name" value="PurM-like C-terminal domain"/>
    <property type="match status" value="1"/>
</dbReference>
<dbReference type="Gene3D" id="3.30.1330.10">
    <property type="entry name" value="PurM-like, N-terminal domain"/>
    <property type="match status" value="1"/>
</dbReference>
<dbReference type="HAMAP" id="MF_00741">
    <property type="entry name" value="AIRS"/>
    <property type="match status" value="1"/>
</dbReference>
<dbReference type="InterPro" id="IPR010918">
    <property type="entry name" value="PurM-like_C_dom"/>
</dbReference>
<dbReference type="InterPro" id="IPR036676">
    <property type="entry name" value="PurM-like_C_sf"/>
</dbReference>
<dbReference type="InterPro" id="IPR016188">
    <property type="entry name" value="PurM-like_N"/>
</dbReference>
<dbReference type="InterPro" id="IPR036921">
    <property type="entry name" value="PurM-like_N_sf"/>
</dbReference>
<dbReference type="InterPro" id="IPR004733">
    <property type="entry name" value="PurM_cligase"/>
</dbReference>
<dbReference type="NCBIfam" id="TIGR00878">
    <property type="entry name" value="purM"/>
    <property type="match status" value="1"/>
</dbReference>
<dbReference type="PANTHER" id="PTHR10520:SF12">
    <property type="entry name" value="TRIFUNCTIONAL PURINE BIOSYNTHETIC PROTEIN ADENOSINE-3"/>
    <property type="match status" value="1"/>
</dbReference>
<dbReference type="PANTHER" id="PTHR10520">
    <property type="entry name" value="TRIFUNCTIONAL PURINE BIOSYNTHETIC PROTEIN ADENOSINE-3-RELATED"/>
    <property type="match status" value="1"/>
</dbReference>
<dbReference type="Pfam" id="PF00586">
    <property type="entry name" value="AIRS"/>
    <property type="match status" value="1"/>
</dbReference>
<dbReference type="Pfam" id="PF02769">
    <property type="entry name" value="AIRS_C"/>
    <property type="match status" value="1"/>
</dbReference>
<dbReference type="SUPFAM" id="SSF56042">
    <property type="entry name" value="PurM C-terminal domain-like"/>
    <property type="match status" value="1"/>
</dbReference>
<dbReference type="SUPFAM" id="SSF55326">
    <property type="entry name" value="PurM N-terminal domain-like"/>
    <property type="match status" value="1"/>
</dbReference>
<proteinExistence type="inferred from homology"/>
<sequence>MTDKTSLSYKDAGVDIDAGNALVGRIKGVVKKTRRPEVMGGLGGFGALCALPQKYREPVLVSGTDGVGTKLRLAMDLKRHDTIGIDLVAMCVNDLVVQGAEPLFFLDYYATGKLDVDTASAVISGIAEGCLQSGCSLVGGETAEMPGMYHGEDYDVAGFCVGVVEKSEIIDGSKVSDGDVLIALGSSGPHSNGYSLVRKILEVSGCDPQTTELDGKPLADHLLAPTRIYVKSVLELIEKVDVHAIAHLTGGGFWENIPRVLPDNTQAVIDESSWQWPEVFNWLQTAGNVERHEMYRTFNCGVGMIIALPAPEVDKALALLNANGENAWKIGIIKASDSEQRVVIE</sequence>
<evidence type="ECO:0000255" key="1">
    <source>
        <dbReference type="HAMAP-Rule" id="MF_00741"/>
    </source>
</evidence>
<feature type="chain" id="PRO_1000193022" description="Phosphoribosylformylglycinamidine cyclo-ligase">
    <location>
        <begin position="1"/>
        <end position="345"/>
    </location>
</feature>
<accession>B7M7K3</accession>
<gene>
    <name evidence="1" type="primary">purM</name>
    <name type="ordered locus">ECIAI1_2551</name>
</gene>
<organism>
    <name type="scientific">Escherichia coli O8 (strain IAI1)</name>
    <dbReference type="NCBI Taxonomy" id="585034"/>
    <lineage>
        <taxon>Bacteria</taxon>
        <taxon>Pseudomonadati</taxon>
        <taxon>Pseudomonadota</taxon>
        <taxon>Gammaproteobacteria</taxon>
        <taxon>Enterobacterales</taxon>
        <taxon>Enterobacteriaceae</taxon>
        <taxon>Escherichia</taxon>
    </lineage>
</organism>
<keyword id="KW-0067">ATP-binding</keyword>
<keyword id="KW-0963">Cytoplasm</keyword>
<keyword id="KW-0436">Ligase</keyword>
<keyword id="KW-0547">Nucleotide-binding</keyword>
<keyword id="KW-0658">Purine biosynthesis</keyword>
<reference key="1">
    <citation type="journal article" date="2009" name="PLoS Genet.">
        <title>Organised genome dynamics in the Escherichia coli species results in highly diverse adaptive paths.</title>
        <authorList>
            <person name="Touchon M."/>
            <person name="Hoede C."/>
            <person name="Tenaillon O."/>
            <person name="Barbe V."/>
            <person name="Baeriswyl S."/>
            <person name="Bidet P."/>
            <person name="Bingen E."/>
            <person name="Bonacorsi S."/>
            <person name="Bouchier C."/>
            <person name="Bouvet O."/>
            <person name="Calteau A."/>
            <person name="Chiapello H."/>
            <person name="Clermont O."/>
            <person name="Cruveiller S."/>
            <person name="Danchin A."/>
            <person name="Diard M."/>
            <person name="Dossat C."/>
            <person name="Karoui M.E."/>
            <person name="Frapy E."/>
            <person name="Garry L."/>
            <person name="Ghigo J.M."/>
            <person name="Gilles A.M."/>
            <person name="Johnson J."/>
            <person name="Le Bouguenec C."/>
            <person name="Lescat M."/>
            <person name="Mangenot S."/>
            <person name="Martinez-Jehanne V."/>
            <person name="Matic I."/>
            <person name="Nassif X."/>
            <person name="Oztas S."/>
            <person name="Petit M.A."/>
            <person name="Pichon C."/>
            <person name="Rouy Z."/>
            <person name="Ruf C.S."/>
            <person name="Schneider D."/>
            <person name="Tourret J."/>
            <person name="Vacherie B."/>
            <person name="Vallenet D."/>
            <person name="Medigue C."/>
            <person name="Rocha E.P.C."/>
            <person name="Denamur E."/>
        </authorList>
    </citation>
    <scope>NUCLEOTIDE SEQUENCE [LARGE SCALE GENOMIC DNA]</scope>
    <source>
        <strain>IAI1</strain>
    </source>
</reference>
<comment type="catalytic activity">
    <reaction evidence="1">
        <text>2-formamido-N(1)-(5-O-phospho-beta-D-ribosyl)acetamidine + ATP = 5-amino-1-(5-phospho-beta-D-ribosyl)imidazole + ADP + phosphate + H(+)</text>
        <dbReference type="Rhea" id="RHEA:23032"/>
        <dbReference type="ChEBI" id="CHEBI:15378"/>
        <dbReference type="ChEBI" id="CHEBI:30616"/>
        <dbReference type="ChEBI" id="CHEBI:43474"/>
        <dbReference type="ChEBI" id="CHEBI:137981"/>
        <dbReference type="ChEBI" id="CHEBI:147287"/>
        <dbReference type="ChEBI" id="CHEBI:456216"/>
        <dbReference type="EC" id="6.3.3.1"/>
    </reaction>
</comment>
<comment type="pathway">
    <text evidence="1">Purine metabolism; IMP biosynthesis via de novo pathway; 5-amino-1-(5-phospho-D-ribosyl)imidazole from N(2)-formyl-N(1)-(5-phospho-D-ribosyl)glycinamide: step 2/2.</text>
</comment>
<comment type="subcellular location">
    <subcellularLocation>
        <location evidence="1">Cytoplasm</location>
    </subcellularLocation>
</comment>
<comment type="similarity">
    <text evidence="1">Belongs to the AIR synthase family.</text>
</comment>
<name>PUR5_ECO8A</name>
<protein>
    <recommendedName>
        <fullName evidence="1">Phosphoribosylformylglycinamidine cyclo-ligase</fullName>
        <ecNumber evidence="1">6.3.3.1</ecNumber>
    </recommendedName>
    <alternativeName>
        <fullName evidence="1">AIR synthase</fullName>
    </alternativeName>
    <alternativeName>
        <fullName evidence="1">AIRS</fullName>
    </alternativeName>
    <alternativeName>
        <fullName evidence="1">Phosphoribosyl-aminoimidazole synthetase</fullName>
    </alternativeName>
</protein>